<dbReference type="EC" id="6.3.2.4" evidence="2"/>
<dbReference type="EMBL" id="AE000657">
    <property type="protein sequence ID" value="AAC06765.1"/>
    <property type="molecule type" value="Genomic_DNA"/>
</dbReference>
<dbReference type="PIR" id="B70347">
    <property type="entry name" value="B70347"/>
</dbReference>
<dbReference type="RefSeq" id="NP_213366.1">
    <property type="nucleotide sequence ID" value="NC_000918.1"/>
</dbReference>
<dbReference type="RefSeq" id="WP_010880304.1">
    <property type="nucleotide sequence ID" value="NC_000918.1"/>
</dbReference>
<dbReference type="SMR" id="O66806"/>
<dbReference type="FunCoup" id="O66806">
    <property type="interactions" value="241"/>
</dbReference>
<dbReference type="STRING" id="224324.aq_521"/>
<dbReference type="EnsemblBacteria" id="AAC06765">
    <property type="protein sequence ID" value="AAC06765"/>
    <property type="gene ID" value="aq_521"/>
</dbReference>
<dbReference type="KEGG" id="aae:aq_521"/>
<dbReference type="PATRIC" id="fig|224324.8.peg.428"/>
<dbReference type="eggNOG" id="COG1181">
    <property type="taxonomic scope" value="Bacteria"/>
</dbReference>
<dbReference type="HOGENOM" id="CLU_039268_2_0_0"/>
<dbReference type="InParanoid" id="O66806"/>
<dbReference type="OrthoDB" id="9813261at2"/>
<dbReference type="UniPathway" id="UPA00219"/>
<dbReference type="Proteomes" id="UP000000798">
    <property type="component" value="Chromosome"/>
</dbReference>
<dbReference type="GO" id="GO:0005737">
    <property type="term" value="C:cytoplasm"/>
    <property type="evidence" value="ECO:0007669"/>
    <property type="project" value="UniProtKB-SubCell"/>
</dbReference>
<dbReference type="GO" id="GO:0005524">
    <property type="term" value="F:ATP binding"/>
    <property type="evidence" value="ECO:0007669"/>
    <property type="project" value="UniProtKB-KW"/>
</dbReference>
<dbReference type="GO" id="GO:0008716">
    <property type="term" value="F:D-alanine-D-alanine ligase activity"/>
    <property type="evidence" value="ECO:0000318"/>
    <property type="project" value="GO_Central"/>
</dbReference>
<dbReference type="GO" id="GO:0046872">
    <property type="term" value="F:metal ion binding"/>
    <property type="evidence" value="ECO:0007669"/>
    <property type="project" value="UniProtKB-KW"/>
</dbReference>
<dbReference type="GO" id="GO:0071555">
    <property type="term" value="P:cell wall organization"/>
    <property type="evidence" value="ECO:0007669"/>
    <property type="project" value="UniProtKB-KW"/>
</dbReference>
<dbReference type="GO" id="GO:0009252">
    <property type="term" value="P:peptidoglycan biosynthetic process"/>
    <property type="evidence" value="ECO:0007669"/>
    <property type="project" value="UniProtKB-UniRule"/>
</dbReference>
<dbReference type="GO" id="GO:0008360">
    <property type="term" value="P:regulation of cell shape"/>
    <property type="evidence" value="ECO:0007669"/>
    <property type="project" value="UniProtKB-KW"/>
</dbReference>
<dbReference type="FunFam" id="3.30.1490.20:FF:000057">
    <property type="entry name" value="D-alanine--D-alanine ligase"/>
    <property type="match status" value="1"/>
</dbReference>
<dbReference type="Gene3D" id="3.40.50.20">
    <property type="match status" value="1"/>
</dbReference>
<dbReference type="Gene3D" id="3.30.1490.20">
    <property type="entry name" value="ATP-grasp fold, A domain"/>
    <property type="match status" value="1"/>
</dbReference>
<dbReference type="Gene3D" id="3.30.470.20">
    <property type="entry name" value="ATP-grasp fold, B domain"/>
    <property type="match status" value="1"/>
</dbReference>
<dbReference type="HAMAP" id="MF_00047">
    <property type="entry name" value="Dala_Dala_lig"/>
    <property type="match status" value="1"/>
</dbReference>
<dbReference type="InterPro" id="IPR011761">
    <property type="entry name" value="ATP-grasp"/>
</dbReference>
<dbReference type="InterPro" id="IPR013815">
    <property type="entry name" value="ATP_grasp_subdomain_1"/>
</dbReference>
<dbReference type="InterPro" id="IPR000291">
    <property type="entry name" value="D-Ala_lig_Van_CS"/>
</dbReference>
<dbReference type="InterPro" id="IPR005905">
    <property type="entry name" value="D_ala_D_ala"/>
</dbReference>
<dbReference type="InterPro" id="IPR011095">
    <property type="entry name" value="Dala_Dala_lig_C"/>
</dbReference>
<dbReference type="InterPro" id="IPR011127">
    <property type="entry name" value="Dala_Dala_lig_N"/>
</dbReference>
<dbReference type="InterPro" id="IPR016185">
    <property type="entry name" value="PreATP-grasp_dom_sf"/>
</dbReference>
<dbReference type="NCBIfam" id="TIGR01205">
    <property type="entry name" value="D_ala_D_alaTIGR"/>
    <property type="match status" value="1"/>
</dbReference>
<dbReference type="NCBIfam" id="NF002378">
    <property type="entry name" value="PRK01372.1"/>
    <property type="match status" value="1"/>
</dbReference>
<dbReference type="PANTHER" id="PTHR23132">
    <property type="entry name" value="D-ALANINE--D-ALANINE LIGASE"/>
    <property type="match status" value="1"/>
</dbReference>
<dbReference type="PANTHER" id="PTHR23132:SF23">
    <property type="entry name" value="D-ALANINE--D-ALANINE LIGASE B"/>
    <property type="match status" value="1"/>
</dbReference>
<dbReference type="Pfam" id="PF07478">
    <property type="entry name" value="Dala_Dala_lig_C"/>
    <property type="match status" value="1"/>
</dbReference>
<dbReference type="Pfam" id="PF01820">
    <property type="entry name" value="Dala_Dala_lig_N"/>
    <property type="match status" value="2"/>
</dbReference>
<dbReference type="PIRSF" id="PIRSF039102">
    <property type="entry name" value="Ddl/VanB"/>
    <property type="match status" value="1"/>
</dbReference>
<dbReference type="SUPFAM" id="SSF56059">
    <property type="entry name" value="Glutathione synthetase ATP-binding domain-like"/>
    <property type="match status" value="1"/>
</dbReference>
<dbReference type="SUPFAM" id="SSF52440">
    <property type="entry name" value="PreATP-grasp domain"/>
    <property type="match status" value="1"/>
</dbReference>
<dbReference type="PROSITE" id="PS50975">
    <property type="entry name" value="ATP_GRASP"/>
    <property type="match status" value="1"/>
</dbReference>
<dbReference type="PROSITE" id="PS00843">
    <property type="entry name" value="DALA_DALA_LIGASE_1"/>
    <property type="match status" value="1"/>
</dbReference>
<dbReference type="PROSITE" id="PS00844">
    <property type="entry name" value="DALA_DALA_LIGASE_2"/>
    <property type="match status" value="1"/>
</dbReference>
<reference key="1">
    <citation type="journal article" date="1998" name="Nature">
        <title>The complete genome of the hyperthermophilic bacterium Aquifex aeolicus.</title>
        <authorList>
            <person name="Deckert G."/>
            <person name="Warren P.V."/>
            <person name="Gaasterland T."/>
            <person name="Young W.G."/>
            <person name="Lenox A.L."/>
            <person name="Graham D.E."/>
            <person name="Overbeek R."/>
            <person name="Snead M.A."/>
            <person name="Keller M."/>
            <person name="Aujay M."/>
            <person name="Huber R."/>
            <person name="Feldman R.A."/>
            <person name="Short J.M."/>
            <person name="Olsen G.J."/>
            <person name="Swanson R.V."/>
        </authorList>
    </citation>
    <scope>NUCLEOTIDE SEQUENCE [LARGE SCALE GENOMIC DNA]</scope>
    <source>
        <strain>VF5</strain>
    </source>
</reference>
<accession>O66806</accession>
<keyword id="KW-0067">ATP-binding</keyword>
<keyword id="KW-0133">Cell shape</keyword>
<keyword id="KW-0961">Cell wall biogenesis/degradation</keyword>
<keyword id="KW-0963">Cytoplasm</keyword>
<keyword id="KW-0436">Ligase</keyword>
<keyword id="KW-0460">Magnesium</keyword>
<keyword id="KW-0464">Manganese</keyword>
<keyword id="KW-0479">Metal-binding</keyword>
<keyword id="KW-0547">Nucleotide-binding</keyword>
<keyword id="KW-0573">Peptidoglycan synthesis</keyword>
<keyword id="KW-1185">Reference proteome</keyword>
<sequence length="291" mass="32797">MRVVVLMGGRSSEREISLKTGKAVAKALRELGHEVYELDLDKELPCKLLEIKPDKVFIALHGRYGEDGTVQGLLEILDIPYTGSDTIASAVSIDKDFTKRIVKSLGINTPDWETFISEGDVLNTEWNKFPAVVKPVREGSSVGLKIVESLEELKEYALDLLKKTERVMVEEFVEGRDMTVGILKGEALPVVEIIPKKGVYDYECKYTKGMSEYRILKDEKLSKKLQEISLKISKFLSLKDFARIDFRVTKEGKIFFLEVNTIPGMTELSLLPMAAKEKGMDFKKLISIIIT</sequence>
<gene>
    <name evidence="2" type="primary">ddl</name>
    <name type="synonym">ddlA</name>
    <name type="ordered locus">aq_521</name>
</gene>
<name>DDL_AQUAE</name>
<evidence type="ECO:0000250" key="1"/>
<evidence type="ECO:0000255" key="2">
    <source>
        <dbReference type="HAMAP-Rule" id="MF_00047"/>
    </source>
</evidence>
<feature type="chain" id="PRO_0000177780" description="D-alanine--D-alanine ligase">
    <location>
        <begin position="1"/>
        <end position="291"/>
    </location>
</feature>
<feature type="domain" description="ATP-grasp" evidence="2">
    <location>
        <begin position="99"/>
        <end position="291"/>
    </location>
</feature>
<feature type="binding site" evidence="2">
    <location>
        <begin position="125"/>
        <end position="179"/>
    </location>
    <ligand>
        <name>ATP</name>
        <dbReference type="ChEBI" id="CHEBI:30616"/>
    </ligand>
</feature>
<feature type="binding site" evidence="2">
    <location>
        <position position="245"/>
    </location>
    <ligand>
        <name>Mg(2+)</name>
        <dbReference type="ChEBI" id="CHEBI:18420"/>
        <label>1</label>
    </ligand>
</feature>
<feature type="binding site" evidence="2">
    <location>
        <position position="258"/>
    </location>
    <ligand>
        <name>Mg(2+)</name>
        <dbReference type="ChEBI" id="CHEBI:18420"/>
        <label>1</label>
    </ligand>
</feature>
<feature type="binding site" evidence="2">
    <location>
        <position position="258"/>
    </location>
    <ligand>
        <name>Mg(2+)</name>
        <dbReference type="ChEBI" id="CHEBI:18420"/>
        <label>2</label>
    </ligand>
</feature>
<feature type="binding site" evidence="2">
    <location>
        <position position="260"/>
    </location>
    <ligand>
        <name>Mg(2+)</name>
        <dbReference type="ChEBI" id="CHEBI:18420"/>
        <label>2</label>
    </ligand>
</feature>
<comment type="function">
    <text evidence="2">Cell wall formation.</text>
</comment>
<comment type="catalytic activity">
    <reaction evidence="2">
        <text>2 D-alanine + ATP = D-alanyl-D-alanine + ADP + phosphate + H(+)</text>
        <dbReference type="Rhea" id="RHEA:11224"/>
        <dbReference type="ChEBI" id="CHEBI:15378"/>
        <dbReference type="ChEBI" id="CHEBI:30616"/>
        <dbReference type="ChEBI" id="CHEBI:43474"/>
        <dbReference type="ChEBI" id="CHEBI:57416"/>
        <dbReference type="ChEBI" id="CHEBI:57822"/>
        <dbReference type="ChEBI" id="CHEBI:456216"/>
        <dbReference type="EC" id="6.3.2.4"/>
    </reaction>
</comment>
<comment type="cofactor">
    <cofactor evidence="1">
        <name>Mg(2+)</name>
        <dbReference type="ChEBI" id="CHEBI:18420"/>
    </cofactor>
    <cofactor evidence="1">
        <name>Mn(2+)</name>
        <dbReference type="ChEBI" id="CHEBI:29035"/>
    </cofactor>
    <text evidence="1">Binds 2 magnesium or manganese ions per subunit.</text>
</comment>
<comment type="pathway">
    <text evidence="2">Cell wall biogenesis; peptidoglycan biosynthesis.</text>
</comment>
<comment type="subcellular location">
    <subcellularLocation>
        <location evidence="2">Cytoplasm</location>
    </subcellularLocation>
</comment>
<comment type="similarity">
    <text evidence="2">Belongs to the D-alanine--D-alanine ligase family.</text>
</comment>
<protein>
    <recommendedName>
        <fullName evidence="2">D-alanine--D-alanine ligase</fullName>
        <ecNumber evidence="2">6.3.2.4</ecNumber>
    </recommendedName>
    <alternativeName>
        <fullName evidence="2">D-Ala-D-Ala ligase</fullName>
    </alternativeName>
    <alternativeName>
        <fullName evidence="2">D-alanylalanine synthetase</fullName>
    </alternativeName>
</protein>
<proteinExistence type="inferred from homology"/>
<organism>
    <name type="scientific">Aquifex aeolicus (strain VF5)</name>
    <dbReference type="NCBI Taxonomy" id="224324"/>
    <lineage>
        <taxon>Bacteria</taxon>
        <taxon>Pseudomonadati</taxon>
        <taxon>Aquificota</taxon>
        <taxon>Aquificia</taxon>
        <taxon>Aquificales</taxon>
        <taxon>Aquificaceae</taxon>
        <taxon>Aquifex</taxon>
    </lineage>
</organism>